<sequence length="8" mass="918">DEDNVLLT</sequence>
<protein>
    <recommendedName>
        <fullName>Verectin</fullName>
    </recommendedName>
</protein>
<accession>P83233</accession>
<proteinExistence type="evidence at protein level"/>
<keyword id="KW-0049">Antioxidant</keyword>
<keyword id="KW-0903">Direct protein sequencing</keyword>
<reference key="1">
    <citation type="journal article" date="2003" name="Planta Med.">
        <title>Radical scavenging glycoprotein inhibiting cyclooxygenase-2 and thromboxane A2 synthase from Aloe vera gel.</title>
        <authorList>
            <person name="Yagi A."/>
            <person name="Kabash A."/>
            <person name="Mizuno K."/>
            <person name="Moustafa S.M."/>
            <person name="Khalifa T.I."/>
            <person name="Tsuji H."/>
        </authorList>
    </citation>
    <scope>PROTEIN SEQUENCE</scope>
    <scope>FUNCTION</scope>
    <source>
        <tissue>Leaf gel</tissue>
    </source>
</reference>
<name>VTIN_ALOVR</name>
<feature type="chain" id="PRO_0000065938" description="Verectin">
    <location>
        <begin position="1"/>
        <end position="8" status="greater than"/>
    </location>
</feature>
<feature type="non-terminal residue">
    <location>
        <position position="8"/>
    </location>
</feature>
<organism>
    <name type="scientific">Aloe vera</name>
    <name type="common">Aloe</name>
    <name type="synonym">Aloe barbadensis</name>
    <dbReference type="NCBI Taxonomy" id="34199"/>
    <lineage>
        <taxon>Eukaryota</taxon>
        <taxon>Viridiplantae</taxon>
        <taxon>Streptophyta</taxon>
        <taxon>Embryophyta</taxon>
        <taxon>Tracheophyta</taxon>
        <taxon>Spermatophyta</taxon>
        <taxon>Magnoliopsida</taxon>
        <taxon>Liliopsida</taxon>
        <taxon>Asparagales</taxon>
        <taxon>Asphodelaceae</taxon>
        <taxon>Asphodeloideae</taxon>
        <taxon>Aloe</taxon>
    </lineage>
</organism>
<evidence type="ECO:0000269" key="1">
    <source>
    </source>
</evidence>
<comment type="function">
    <text evidence="1">Has antioxidant activity. Inhibits cyclooxygenase-2 and thromboxane A2 synthase.</text>
</comment>
<dbReference type="GO" id="GO:0016209">
    <property type="term" value="F:antioxidant activity"/>
    <property type="evidence" value="ECO:0007669"/>
    <property type="project" value="UniProtKB-KW"/>
</dbReference>